<sequence>MAPWLELVFDVPLDKSFTYRACAAHAGEALVGRRVLAPFGARTLIGFVISESHSSPADCGGAVGTFKEIIRVIDREALFDQTHLACARWMAHFYLCALGQALCAVVPSRKRERTLSSFASCAGVRRTDTYALSGEQRKAIDAITASTGARSFYVHGVTGSGKTEVFLRAAEAVLARGKSVIYLVPEIALTHQVLQEVYVRFGSQAAVLHSALSGSQRLGEWRRIQCMRHCVVIGARSAIFAPLKRLGLVIMDEEHDSSYKSAHVPRYHARQVAMYRCADANCPFVMGSATPSVEAWYAMLRGAVRRLPLTARVAGGAPPRVEVVDVSKEALLLSTRLVDEIRKTKEAGYQSMLFLNRRGFSYSFQCRSCGYTLCCTQCAVPLTWHKRVGAMQCHYCGRQEAPPESCPCCHSFDTRYGGVGTEYIEEAVQALFPEYRIARVDTDALRSGHVQQTMEQFRAGKIDVLLGTQMIAKGFNFPTLRLVGIACADTGLHTPDFRAAERSFALMMQVAGRAGRYVDNGLVIIQTRNPAHPAVVCAQHGDCESFYAQELAQREALCFPPFVRLIRFVFRSKTRRKAKDAAYAAHALLTAQMPLGADVLGPAACVVAQVAGSYRMQILLRAPSFPVVQQVARSFLDEFRAPAGVYVESDVDPVNVL</sequence>
<dbReference type="EC" id="5.6.2.4" evidence="1"/>
<dbReference type="EMBL" id="AE000520">
    <property type="protein sequence ID" value="AAC65217.1"/>
    <property type="molecule type" value="Genomic_DNA"/>
</dbReference>
<dbReference type="PIR" id="D71351">
    <property type="entry name" value="D71351"/>
</dbReference>
<dbReference type="RefSeq" id="WP_010881678.1">
    <property type="nucleotide sequence ID" value="NC_021490.2"/>
</dbReference>
<dbReference type="SMR" id="O83258"/>
<dbReference type="STRING" id="243276.TP_0230"/>
<dbReference type="EnsemblBacteria" id="AAC65217">
    <property type="protein sequence ID" value="AAC65217"/>
    <property type="gene ID" value="TP_0230"/>
</dbReference>
<dbReference type="GeneID" id="93876021"/>
<dbReference type="KEGG" id="tpa:TP_0230"/>
<dbReference type="KEGG" id="tpw:TPANIC_0230"/>
<dbReference type="eggNOG" id="COG1198">
    <property type="taxonomic scope" value="Bacteria"/>
</dbReference>
<dbReference type="HOGENOM" id="CLU_013353_3_0_12"/>
<dbReference type="OrthoDB" id="9759544at2"/>
<dbReference type="Proteomes" id="UP000000811">
    <property type="component" value="Chromosome"/>
</dbReference>
<dbReference type="GO" id="GO:1990077">
    <property type="term" value="C:primosome complex"/>
    <property type="evidence" value="ECO:0007669"/>
    <property type="project" value="UniProtKB-UniRule"/>
</dbReference>
<dbReference type="GO" id="GO:0043138">
    <property type="term" value="F:3'-5' DNA helicase activity"/>
    <property type="evidence" value="ECO:0007669"/>
    <property type="project" value="TreeGrafter"/>
</dbReference>
<dbReference type="GO" id="GO:0005524">
    <property type="term" value="F:ATP binding"/>
    <property type="evidence" value="ECO:0007669"/>
    <property type="project" value="UniProtKB-UniRule"/>
</dbReference>
<dbReference type="GO" id="GO:0016887">
    <property type="term" value="F:ATP hydrolysis activity"/>
    <property type="evidence" value="ECO:0007669"/>
    <property type="project" value="RHEA"/>
</dbReference>
<dbReference type="GO" id="GO:0003677">
    <property type="term" value="F:DNA binding"/>
    <property type="evidence" value="ECO:0007669"/>
    <property type="project" value="UniProtKB-UniRule"/>
</dbReference>
<dbReference type="GO" id="GO:0008270">
    <property type="term" value="F:zinc ion binding"/>
    <property type="evidence" value="ECO:0007669"/>
    <property type="project" value="UniProtKB-UniRule"/>
</dbReference>
<dbReference type="GO" id="GO:0006310">
    <property type="term" value="P:DNA recombination"/>
    <property type="evidence" value="ECO:0007669"/>
    <property type="project" value="InterPro"/>
</dbReference>
<dbReference type="GO" id="GO:0006270">
    <property type="term" value="P:DNA replication initiation"/>
    <property type="evidence" value="ECO:0007669"/>
    <property type="project" value="TreeGrafter"/>
</dbReference>
<dbReference type="GO" id="GO:0006269">
    <property type="term" value="P:DNA replication, synthesis of primer"/>
    <property type="evidence" value="ECO:0007669"/>
    <property type="project" value="UniProtKB-KW"/>
</dbReference>
<dbReference type="GO" id="GO:0006302">
    <property type="term" value="P:double-strand break repair"/>
    <property type="evidence" value="ECO:0007669"/>
    <property type="project" value="InterPro"/>
</dbReference>
<dbReference type="CDD" id="cd17929">
    <property type="entry name" value="DEXHc_priA"/>
    <property type="match status" value="1"/>
</dbReference>
<dbReference type="CDD" id="cd18804">
    <property type="entry name" value="SF2_C_priA"/>
    <property type="match status" value="1"/>
</dbReference>
<dbReference type="FunFam" id="3.40.50.300:FF:000489">
    <property type="entry name" value="Primosome assembly protein PriA"/>
    <property type="match status" value="1"/>
</dbReference>
<dbReference type="Gene3D" id="3.40.50.300">
    <property type="entry name" value="P-loop containing nucleotide triphosphate hydrolases"/>
    <property type="match status" value="2"/>
</dbReference>
<dbReference type="Gene3D" id="3.40.1440.60">
    <property type="entry name" value="PriA, 3(prime) DNA-binding domain"/>
    <property type="match status" value="1"/>
</dbReference>
<dbReference type="HAMAP" id="MF_00983">
    <property type="entry name" value="PriA"/>
    <property type="match status" value="1"/>
</dbReference>
<dbReference type="InterPro" id="IPR011545">
    <property type="entry name" value="DEAD/DEAH_box_helicase_dom"/>
</dbReference>
<dbReference type="InterPro" id="IPR014001">
    <property type="entry name" value="Helicase_ATP-bd"/>
</dbReference>
<dbReference type="InterPro" id="IPR001650">
    <property type="entry name" value="Helicase_C-like"/>
</dbReference>
<dbReference type="InterPro" id="IPR027417">
    <property type="entry name" value="P-loop_NTPase"/>
</dbReference>
<dbReference type="InterPro" id="IPR005259">
    <property type="entry name" value="PriA"/>
</dbReference>
<dbReference type="InterPro" id="IPR041222">
    <property type="entry name" value="PriA_3primeBD"/>
</dbReference>
<dbReference type="InterPro" id="IPR042115">
    <property type="entry name" value="PriA_3primeBD_sf"/>
</dbReference>
<dbReference type="InterPro" id="IPR041236">
    <property type="entry name" value="PriA_C"/>
</dbReference>
<dbReference type="InterPro" id="IPR040498">
    <property type="entry name" value="PriA_CRR"/>
</dbReference>
<dbReference type="InterPro" id="IPR050880">
    <property type="entry name" value="PriA_helicase"/>
</dbReference>
<dbReference type="NCBIfam" id="TIGR00595">
    <property type="entry name" value="priA"/>
    <property type="match status" value="1"/>
</dbReference>
<dbReference type="PANTHER" id="PTHR30580">
    <property type="entry name" value="PRIMOSOMAL PROTEIN N"/>
    <property type="match status" value="1"/>
</dbReference>
<dbReference type="PANTHER" id="PTHR30580:SF0">
    <property type="entry name" value="PRIMOSOMAL PROTEIN N"/>
    <property type="match status" value="1"/>
</dbReference>
<dbReference type="Pfam" id="PF00270">
    <property type="entry name" value="DEAD"/>
    <property type="match status" value="1"/>
</dbReference>
<dbReference type="Pfam" id="PF00271">
    <property type="entry name" value="Helicase_C"/>
    <property type="match status" value="1"/>
</dbReference>
<dbReference type="Pfam" id="PF17764">
    <property type="entry name" value="PriA_3primeBD"/>
    <property type="match status" value="1"/>
</dbReference>
<dbReference type="Pfam" id="PF18074">
    <property type="entry name" value="PriA_C"/>
    <property type="match status" value="1"/>
</dbReference>
<dbReference type="Pfam" id="PF18319">
    <property type="entry name" value="Zn_ribbon_PriA"/>
    <property type="match status" value="1"/>
</dbReference>
<dbReference type="SMART" id="SM00487">
    <property type="entry name" value="DEXDc"/>
    <property type="match status" value="1"/>
</dbReference>
<dbReference type="SMART" id="SM00490">
    <property type="entry name" value="HELICc"/>
    <property type="match status" value="1"/>
</dbReference>
<dbReference type="SUPFAM" id="SSF52540">
    <property type="entry name" value="P-loop containing nucleoside triphosphate hydrolases"/>
    <property type="match status" value="1"/>
</dbReference>
<dbReference type="PROSITE" id="PS51192">
    <property type="entry name" value="HELICASE_ATP_BIND_1"/>
    <property type="match status" value="1"/>
</dbReference>
<dbReference type="PROSITE" id="PS51194">
    <property type="entry name" value="HELICASE_CTER"/>
    <property type="match status" value="1"/>
</dbReference>
<comment type="function">
    <text evidence="1">Initiates the restart of stalled replication forks, which reloads the replicative helicase on sites other than the origin of replication. Recognizes and binds to abandoned replication forks and remodels them to uncover a helicase loading site. Promotes assembly of the primosome at these replication forks.</text>
</comment>
<comment type="catalytic activity">
    <reaction evidence="1">
        <text>Couples ATP hydrolysis with the unwinding of duplex DNA by translocating in the 3'-5' direction.</text>
        <dbReference type="EC" id="5.6.2.4"/>
    </reaction>
</comment>
<comment type="catalytic activity">
    <reaction evidence="1">
        <text>ATP + H2O = ADP + phosphate + H(+)</text>
        <dbReference type="Rhea" id="RHEA:13065"/>
        <dbReference type="ChEBI" id="CHEBI:15377"/>
        <dbReference type="ChEBI" id="CHEBI:15378"/>
        <dbReference type="ChEBI" id="CHEBI:30616"/>
        <dbReference type="ChEBI" id="CHEBI:43474"/>
        <dbReference type="ChEBI" id="CHEBI:456216"/>
        <dbReference type="EC" id="5.6.2.4"/>
    </reaction>
</comment>
<comment type="cofactor">
    <cofactor evidence="1">
        <name>Zn(2+)</name>
        <dbReference type="ChEBI" id="CHEBI:29105"/>
    </cofactor>
    <text evidence="1">Binds 2 zinc ions per subunit.</text>
</comment>
<comment type="subunit">
    <text evidence="1">Component of the replication restart primosome.</text>
</comment>
<comment type="similarity">
    <text evidence="1">Belongs to the helicase family. PriA subfamily.</text>
</comment>
<feature type="chain" id="PRO_0000102136" description="Replication restart protein PriA">
    <location>
        <begin position="1"/>
        <end position="657"/>
    </location>
</feature>
<feature type="domain" description="Helicase ATP-binding" evidence="1">
    <location>
        <begin position="143"/>
        <end position="309"/>
    </location>
</feature>
<feature type="domain" description="Helicase C-terminal" evidence="1">
    <location>
        <begin position="390"/>
        <end position="570"/>
    </location>
</feature>
<feature type="short sequence motif" description="DEAH box" evidence="1">
    <location>
        <begin position="252"/>
        <end position="255"/>
    </location>
</feature>
<feature type="binding site" evidence="1">
    <location>
        <begin position="156"/>
        <end position="163"/>
    </location>
    <ligand>
        <name>ATP</name>
        <dbReference type="ChEBI" id="CHEBI:30616"/>
    </ligand>
</feature>
<feature type="binding site" evidence="1">
    <location>
        <position position="366"/>
    </location>
    <ligand>
        <name>Zn(2+)</name>
        <dbReference type="ChEBI" id="CHEBI:29105"/>
        <label>1</label>
    </ligand>
</feature>
<feature type="binding site" evidence="1">
    <location>
        <position position="369"/>
    </location>
    <ligand>
        <name>Zn(2+)</name>
        <dbReference type="ChEBI" id="CHEBI:29105"/>
        <label>1</label>
    </ligand>
</feature>
<feature type="binding site" evidence="1">
    <location>
        <position position="375"/>
    </location>
    <ligand>
        <name>Zn(2+)</name>
        <dbReference type="ChEBI" id="CHEBI:29105"/>
        <label>2</label>
    </ligand>
</feature>
<feature type="binding site" evidence="1">
    <location>
        <position position="378"/>
    </location>
    <ligand>
        <name>Zn(2+)</name>
        <dbReference type="ChEBI" id="CHEBI:29105"/>
        <label>2</label>
    </ligand>
</feature>
<feature type="binding site" evidence="1">
    <location>
        <position position="393"/>
    </location>
    <ligand>
        <name>Zn(2+)</name>
        <dbReference type="ChEBI" id="CHEBI:29105"/>
        <label>2</label>
    </ligand>
</feature>
<feature type="binding site" evidence="1">
    <location>
        <position position="396"/>
    </location>
    <ligand>
        <name>Zn(2+)</name>
        <dbReference type="ChEBI" id="CHEBI:29105"/>
        <label>2</label>
    </ligand>
</feature>
<feature type="binding site" evidence="1">
    <location>
        <position position="406"/>
    </location>
    <ligand>
        <name>Zn(2+)</name>
        <dbReference type="ChEBI" id="CHEBI:29105"/>
        <label>1</label>
    </ligand>
</feature>
<feature type="binding site" evidence="1">
    <location>
        <position position="409"/>
    </location>
    <ligand>
        <name>Zn(2+)</name>
        <dbReference type="ChEBI" id="CHEBI:29105"/>
        <label>1</label>
    </ligand>
</feature>
<proteinExistence type="inferred from homology"/>
<name>PRIA_TREPA</name>
<keyword id="KW-0067">ATP-binding</keyword>
<keyword id="KW-0235">DNA replication</keyword>
<keyword id="KW-0238">DNA-binding</keyword>
<keyword id="KW-0347">Helicase</keyword>
<keyword id="KW-0378">Hydrolase</keyword>
<keyword id="KW-0413">Isomerase</keyword>
<keyword id="KW-0479">Metal-binding</keyword>
<keyword id="KW-0547">Nucleotide-binding</keyword>
<keyword id="KW-0639">Primosome</keyword>
<keyword id="KW-1185">Reference proteome</keyword>
<keyword id="KW-0862">Zinc</keyword>
<organism>
    <name type="scientific">Treponema pallidum (strain Nichols)</name>
    <dbReference type="NCBI Taxonomy" id="243276"/>
    <lineage>
        <taxon>Bacteria</taxon>
        <taxon>Pseudomonadati</taxon>
        <taxon>Spirochaetota</taxon>
        <taxon>Spirochaetia</taxon>
        <taxon>Spirochaetales</taxon>
        <taxon>Treponemataceae</taxon>
        <taxon>Treponema</taxon>
    </lineage>
</organism>
<gene>
    <name evidence="1" type="primary">priA</name>
    <name type="ordered locus">TP_0230</name>
</gene>
<evidence type="ECO:0000255" key="1">
    <source>
        <dbReference type="HAMAP-Rule" id="MF_00983"/>
    </source>
</evidence>
<protein>
    <recommendedName>
        <fullName evidence="1">Replication restart protein PriA</fullName>
    </recommendedName>
    <alternativeName>
        <fullName evidence="1">ATP-dependent DNA helicase PriA</fullName>
        <ecNumber evidence="1">5.6.2.4</ecNumber>
    </alternativeName>
    <alternativeName>
        <fullName evidence="1">DNA 3'-5' helicase PriA</fullName>
    </alternativeName>
</protein>
<reference key="1">
    <citation type="journal article" date="1998" name="Science">
        <title>Complete genome sequence of Treponema pallidum, the syphilis spirochete.</title>
        <authorList>
            <person name="Fraser C.M."/>
            <person name="Norris S.J."/>
            <person name="Weinstock G.M."/>
            <person name="White O."/>
            <person name="Sutton G.G."/>
            <person name="Dodson R.J."/>
            <person name="Gwinn M.L."/>
            <person name="Hickey E.K."/>
            <person name="Clayton R.A."/>
            <person name="Ketchum K.A."/>
            <person name="Sodergren E."/>
            <person name="Hardham J.M."/>
            <person name="McLeod M.P."/>
            <person name="Salzberg S.L."/>
            <person name="Peterson J.D."/>
            <person name="Khalak H.G."/>
            <person name="Richardson D.L."/>
            <person name="Howell J.K."/>
            <person name="Chidambaram M."/>
            <person name="Utterback T.R."/>
            <person name="McDonald L.A."/>
            <person name="Artiach P."/>
            <person name="Bowman C."/>
            <person name="Cotton M.D."/>
            <person name="Fujii C."/>
            <person name="Garland S.A."/>
            <person name="Hatch B."/>
            <person name="Horst K."/>
            <person name="Roberts K.M."/>
            <person name="Sandusky M."/>
            <person name="Weidman J.F."/>
            <person name="Smith H.O."/>
            <person name="Venter J.C."/>
        </authorList>
    </citation>
    <scope>NUCLEOTIDE SEQUENCE [LARGE SCALE GENOMIC DNA]</scope>
    <source>
        <strain>Nichols</strain>
    </source>
</reference>
<accession>O83258</accession>